<gene>
    <name evidence="9" type="primary">TEF3</name>
    <name evidence="10" type="ordered locus">CND02420</name>
</gene>
<keyword id="KW-0067">ATP-binding</keyword>
<keyword id="KW-0963">Cytoplasm</keyword>
<keyword id="KW-0251">Elongation factor</keyword>
<keyword id="KW-0378">Hydrolase</keyword>
<keyword id="KW-0547">Nucleotide-binding</keyword>
<keyword id="KW-0648">Protein biosynthesis</keyword>
<keyword id="KW-1185">Reference proteome</keyword>
<keyword id="KW-0677">Repeat</keyword>
<keyword id="KW-0694">RNA-binding</keyword>
<feature type="chain" id="PRO_0000461806" description="Elongation factor 3">
    <location>
        <begin position="1"/>
        <end position="1055"/>
    </location>
</feature>
<feature type="repeat" description="HEAT 1" evidence="4">
    <location>
        <begin position="45"/>
        <end position="86"/>
    </location>
</feature>
<feature type="repeat" description="HEAT 2" evidence="4">
    <location>
        <begin position="96"/>
        <end position="133"/>
    </location>
</feature>
<feature type="repeat" description="HEAT 3" evidence="4">
    <location>
        <begin position="135"/>
        <end position="172"/>
    </location>
</feature>
<feature type="repeat" description="HEAT 4" evidence="4">
    <location>
        <begin position="175"/>
        <end position="213"/>
    </location>
</feature>
<feature type="repeat" description="HEAT 5" evidence="4">
    <location>
        <begin position="217"/>
        <end position="255"/>
    </location>
</feature>
<feature type="repeat" description="HEAT 6" evidence="4">
    <location>
        <begin position="257"/>
        <end position="290"/>
    </location>
</feature>
<feature type="repeat" description="HEAT 7" evidence="4">
    <location>
        <begin position="295"/>
        <end position="337"/>
    </location>
</feature>
<feature type="domain" description="ABC transporter 1" evidence="5">
    <location>
        <begin position="447"/>
        <end position="659"/>
    </location>
</feature>
<feature type="domain" description="ABC transporter 2" evidence="5">
    <location>
        <begin position="687"/>
        <end position="1004"/>
    </location>
</feature>
<feature type="region of interest" description="Disordered" evidence="6">
    <location>
        <begin position="987"/>
        <end position="1006"/>
    </location>
</feature>
<feature type="region of interest" description="Disordered" evidence="6">
    <location>
        <begin position="1024"/>
        <end position="1055"/>
    </location>
</feature>
<feature type="compositionally biased region" description="Basic residues" evidence="6">
    <location>
        <begin position="1033"/>
        <end position="1044"/>
    </location>
</feature>
<feature type="binding site" evidence="3">
    <location>
        <position position="45"/>
    </location>
    <ligand>
        <name>ADP</name>
        <dbReference type="ChEBI" id="CHEBI:456216"/>
    </ligand>
</feature>
<feature type="binding site" evidence="3">
    <location>
        <position position="723"/>
    </location>
    <ligand>
        <name>ADP</name>
        <dbReference type="ChEBI" id="CHEBI:456216"/>
    </ligand>
</feature>
<feature type="binding site" evidence="3">
    <location>
        <position position="933"/>
    </location>
    <ligand>
        <name>ADP</name>
        <dbReference type="ChEBI" id="CHEBI:456216"/>
    </ligand>
</feature>
<feature type="binding site" evidence="3">
    <location>
        <position position="936"/>
    </location>
    <ligand>
        <name>ADP</name>
        <dbReference type="ChEBI" id="CHEBI:456216"/>
    </ligand>
</feature>
<feature type="binding site" evidence="3">
    <location>
        <position position="962"/>
    </location>
    <ligand>
        <name>ADP</name>
        <dbReference type="ChEBI" id="CHEBI:456216"/>
    </ligand>
</feature>
<accession>Q5KIM6</accession>
<accession>Q55TQ9</accession>
<reference evidence="11" key="1">
    <citation type="journal article" date="2005" name="Science">
        <title>The genome of the basidiomycetous yeast and human pathogen Cryptococcus neoformans.</title>
        <authorList>
            <person name="Loftus B.J."/>
            <person name="Fung E."/>
            <person name="Roncaglia P."/>
            <person name="Rowley D."/>
            <person name="Amedeo P."/>
            <person name="Bruno D."/>
            <person name="Vamathevan J."/>
            <person name="Miranda M."/>
            <person name="Anderson I.J."/>
            <person name="Fraser J.A."/>
            <person name="Allen J.E."/>
            <person name="Bosdet I.E."/>
            <person name="Brent M.R."/>
            <person name="Chiu R."/>
            <person name="Doering T.L."/>
            <person name="Donlin M.J."/>
            <person name="D'Souza C.A."/>
            <person name="Fox D.S."/>
            <person name="Grinberg V."/>
            <person name="Fu J."/>
            <person name="Fukushima M."/>
            <person name="Haas B.J."/>
            <person name="Huang J.C."/>
            <person name="Janbon G."/>
            <person name="Jones S.J.M."/>
            <person name="Koo H.L."/>
            <person name="Krzywinski M.I."/>
            <person name="Kwon-Chung K.J."/>
            <person name="Lengeler K.B."/>
            <person name="Maiti R."/>
            <person name="Marra M.A."/>
            <person name="Marra R.E."/>
            <person name="Mathewson C.A."/>
            <person name="Mitchell T.G."/>
            <person name="Pertea M."/>
            <person name="Riggs F.R."/>
            <person name="Salzberg S.L."/>
            <person name="Schein J.E."/>
            <person name="Shvartsbeyn A."/>
            <person name="Shin H."/>
            <person name="Shumway M."/>
            <person name="Specht C.A."/>
            <person name="Suh B.B."/>
            <person name="Tenney A."/>
            <person name="Utterback T.R."/>
            <person name="Wickes B.L."/>
            <person name="Wortman J.R."/>
            <person name="Wye N.H."/>
            <person name="Kronstad J.W."/>
            <person name="Lodge J.K."/>
            <person name="Heitman J."/>
            <person name="Davis R.W."/>
            <person name="Fraser C.M."/>
            <person name="Hyman R.W."/>
        </authorList>
    </citation>
    <scope>NUCLEOTIDE SEQUENCE [LARGE SCALE GENOMIC DNA]</scope>
    <source>
        <strain evidence="11">JEC21 / ATCC MYA-565</strain>
    </source>
</reference>
<reference evidence="9" key="2">
    <citation type="journal article" date="2001" name="J. Bacteriol.">
        <title>Evolutionary divergence of an elongation factor 3 from Cryptococcus neoformans.</title>
        <authorList>
            <person name="Blakely G."/>
            <person name="Hekman J."/>
            <person name="Chakraburtty K."/>
            <person name="Williamson P.R."/>
        </authorList>
    </citation>
    <scope>FUNCTION</scope>
    <scope>CATALYTIC ACTIVITY</scope>
    <scope>BIOPHYSICOCHEMICAL PROPERTIES</scope>
    <scope>ASSOCIATION WITH RIBOSOMES</scope>
    <source>
        <strain evidence="8">B-3501A</strain>
    </source>
</reference>
<name>EF3_CRYNJ</name>
<organism evidence="11">
    <name type="scientific">Cryptococcus neoformans var. neoformans serotype D (strain JEC21 / ATCC MYA-565)</name>
    <name type="common">Filobasidiella neoformans</name>
    <dbReference type="NCBI Taxonomy" id="214684"/>
    <lineage>
        <taxon>Eukaryota</taxon>
        <taxon>Fungi</taxon>
        <taxon>Dikarya</taxon>
        <taxon>Basidiomycota</taxon>
        <taxon>Agaricomycotina</taxon>
        <taxon>Tremellomycetes</taxon>
        <taxon>Tremellales</taxon>
        <taxon>Cryptococcaceae</taxon>
        <taxon>Cryptococcus</taxon>
        <taxon>Cryptococcus neoformans species complex</taxon>
    </lineage>
</organism>
<dbReference type="EC" id="3.6.4.-" evidence="7"/>
<dbReference type="EMBL" id="AE017344">
    <property type="protein sequence ID" value="AAW42954.1"/>
    <property type="molecule type" value="Genomic_DNA"/>
</dbReference>
<dbReference type="RefSeq" id="XP_570261.1">
    <property type="nucleotide sequence ID" value="XM_570261.1"/>
</dbReference>
<dbReference type="FunCoup" id="Q5KIM6">
    <property type="interactions" value="31"/>
</dbReference>
<dbReference type="STRING" id="214684.Q5KIM6"/>
<dbReference type="PaxDb" id="214684-Q5KIM6"/>
<dbReference type="EnsemblFungi" id="AAW42954">
    <property type="protein sequence ID" value="AAW42954"/>
    <property type="gene ID" value="CND02420"/>
</dbReference>
<dbReference type="GeneID" id="3257172"/>
<dbReference type="KEGG" id="cne:CND02420"/>
<dbReference type="VEuPathDB" id="FungiDB:CND02420"/>
<dbReference type="eggNOG" id="KOG0062">
    <property type="taxonomic scope" value="Eukaryota"/>
</dbReference>
<dbReference type="eggNOG" id="KOG1242">
    <property type="taxonomic scope" value="Eukaryota"/>
</dbReference>
<dbReference type="HOGENOM" id="CLU_002848_0_0_1"/>
<dbReference type="InParanoid" id="Q5KIM6"/>
<dbReference type="OMA" id="VLSEAMW"/>
<dbReference type="OrthoDB" id="2110130at2759"/>
<dbReference type="UniPathway" id="UPA00345"/>
<dbReference type="Proteomes" id="UP000002149">
    <property type="component" value="Chromosome 4"/>
</dbReference>
<dbReference type="GO" id="GO:0005829">
    <property type="term" value="C:cytosol"/>
    <property type="evidence" value="ECO:0007669"/>
    <property type="project" value="UniProtKB-SubCell"/>
</dbReference>
<dbReference type="GO" id="GO:0005524">
    <property type="term" value="F:ATP binding"/>
    <property type="evidence" value="ECO:0000318"/>
    <property type="project" value="GO_Central"/>
</dbReference>
<dbReference type="GO" id="GO:0016887">
    <property type="term" value="F:ATP hydrolysis activity"/>
    <property type="evidence" value="ECO:0000318"/>
    <property type="project" value="GO_Central"/>
</dbReference>
<dbReference type="GO" id="GO:0003723">
    <property type="term" value="F:RNA binding"/>
    <property type="evidence" value="ECO:0007669"/>
    <property type="project" value="UniProtKB-KW"/>
</dbReference>
<dbReference type="GO" id="GO:0003746">
    <property type="term" value="F:translation elongation factor activity"/>
    <property type="evidence" value="ECO:0000314"/>
    <property type="project" value="UniProtKB"/>
</dbReference>
<dbReference type="GO" id="GO:0002182">
    <property type="term" value="P:cytoplasmic translational elongation"/>
    <property type="evidence" value="ECO:0000316"/>
    <property type="project" value="UniProtKB"/>
</dbReference>
<dbReference type="CDD" id="cd03221">
    <property type="entry name" value="ABCF_EF-3"/>
    <property type="match status" value="1"/>
</dbReference>
<dbReference type="CDD" id="cd18626">
    <property type="entry name" value="CD_eEF3"/>
    <property type="match status" value="1"/>
</dbReference>
<dbReference type="FunFam" id="1.25.10.10:FF:000076">
    <property type="entry name" value="Elongation factor 3"/>
    <property type="match status" value="1"/>
</dbReference>
<dbReference type="FunFam" id="2.40.50.990:FF:000002">
    <property type="entry name" value="mRNA export factor elf1"/>
    <property type="match status" value="1"/>
</dbReference>
<dbReference type="FunFam" id="3.40.50.300:FF:000193">
    <property type="entry name" value="Probable Elongation factor 3"/>
    <property type="match status" value="1"/>
</dbReference>
<dbReference type="Gene3D" id="2.40.50.990">
    <property type="match status" value="1"/>
</dbReference>
<dbReference type="Gene3D" id="1.25.10.10">
    <property type="entry name" value="Leucine-rich Repeat Variant"/>
    <property type="match status" value="1"/>
</dbReference>
<dbReference type="Gene3D" id="3.40.50.300">
    <property type="entry name" value="P-loop containing nucleotide triphosphate hydrolases"/>
    <property type="match status" value="2"/>
</dbReference>
<dbReference type="InterPro" id="IPR003593">
    <property type="entry name" value="AAA+_ATPase"/>
</dbReference>
<dbReference type="InterPro" id="IPR003439">
    <property type="entry name" value="ABC_transporter-like_ATP-bd"/>
</dbReference>
<dbReference type="InterPro" id="IPR017871">
    <property type="entry name" value="ABC_transporter-like_CS"/>
</dbReference>
<dbReference type="InterPro" id="IPR050611">
    <property type="entry name" value="ABCF_EF3_subfamily"/>
</dbReference>
<dbReference type="InterPro" id="IPR011989">
    <property type="entry name" value="ARM-like"/>
</dbReference>
<dbReference type="InterPro" id="IPR016024">
    <property type="entry name" value="ARM-type_fold"/>
</dbReference>
<dbReference type="InterPro" id="IPR000953">
    <property type="entry name" value="Chromo/chromo_shadow_dom"/>
</dbReference>
<dbReference type="InterPro" id="IPR015688">
    <property type="entry name" value="eEF3_ABC2_chromodomain-like"/>
</dbReference>
<dbReference type="InterPro" id="IPR047038">
    <property type="entry name" value="eEF3_chromodomain-like_sf"/>
</dbReference>
<dbReference type="InterPro" id="IPR021133">
    <property type="entry name" value="HEAT_type_2"/>
</dbReference>
<dbReference type="InterPro" id="IPR027417">
    <property type="entry name" value="P-loop_NTPase"/>
</dbReference>
<dbReference type="InterPro" id="IPR034085">
    <property type="entry name" value="TOG"/>
</dbReference>
<dbReference type="PANTHER" id="PTHR19211">
    <property type="entry name" value="ATP-BINDING TRANSPORT PROTEIN-RELATED"/>
    <property type="match status" value="1"/>
</dbReference>
<dbReference type="PANTHER" id="PTHR19211:SF5">
    <property type="entry name" value="ELONGATION FACTOR 3A-RELATED"/>
    <property type="match status" value="1"/>
</dbReference>
<dbReference type="Pfam" id="PF00005">
    <property type="entry name" value="ABC_tran"/>
    <property type="match status" value="2"/>
</dbReference>
<dbReference type="Pfam" id="PF24984">
    <property type="entry name" value="HEAT_EF3_GNC1"/>
    <property type="match status" value="1"/>
</dbReference>
<dbReference type="Pfam" id="PF24987">
    <property type="entry name" value="HEAT_EF3_N"/>
    <property type="match status" value="1"/>
</dbReference>
<dbReference type="SMART" id="SM00382">
    <property type="entry name" value="AAA"/>
    <property type="match status" value="2"/>
</dbReference>
<dbReference type="SMART" id="SM00298">
    <property type="entry name" value="CHROMO"/>
    <property type="match status" value="1"/>
</dbReference>
<dbReference type="SMART" id="SM01349">
    <property type="entry name" value="TOG"/>
    <property type="match status" value="1"/>
</dbReference>
<dbReference type="SUPFAM" id="SSF48371">
    <property type="entry name" value="ARM repeat"/>
    <property type="match status" value="1"/>
</dbReference>
<dbReference type="SUPFAM" id="SSF52540">
    <property type="entry name" value="P-loop containing nucleoside triphosphate hydrolases"/>
    <property type="match status" value="2"/>
</dbReference>
<dbReference type="PROSITE" id="PS00211">
    <property type="entry name" value="ABC_TRANSPORTER_1"/>
    <property type="match status" value="2"/>
</dbReference>
<dbReference type="PROSITE" id="PS50893">
    <property type="entry name" value="ABC_TRANSPORTER_2"/>
    <property type="match status" value="2"/>
</dbReference>
<dbReference type="PROSITE" id="PS50077">
    <property type="entry name" value="HEAT_REPEAT"/>
    <property type="match status" value="1"/>
</dbReference>
<evidence type="ECO:0000250" key="1">
    <source>
        <dbReference type="UniProtKB" id="J9VQZ9"/>
    </source>
</evidence>
<evidence type="ECO:0000250" key="2">
    <source>
        <dbReference type="UniProtKB" id="O93796"/>
    </source>
</evidence>
<evidence type="ECO:0000250" key="3">
    <source>
        <dbReference type="UniProtKB" id="P16521"/>
    </source>
</evidence>
<evidence type="ECO:0000255" key="4"/>
<evidence type="ECO:0000255" key="5">
    <source>
        <dbReference type="PROSITE-ProRule" id="PRU00434"/>
    </source>
</evidence>
<evidence type="ECO:0000256" key="6">
    <source>
        <dbReference type="SAM" id="MobiDB-lite"/>
    </source>
</evidence>
<evidence type="ECO:0000269" key="7">
    <source>
    </source>
</evidence>
<evidence type="ECO:0000303" key="8">
    <source>
    </source>
</evidence>
<evidence type="ECO:0000305" key="9"/>
<evidence type="ECO:0000312" key="10">
    <source>
        <dbReference type="EMBL" id="AAW42954.1"/>
    </source>
</evidence>
<evidence type="ECO:0000312" key="11">
    <source>
        <dbReference type="Proteomes" id="UP000002149"/>
    </source>
</evidence>
<protein>
    <recommendedName>
        <fullName evidence="9">Elongation factor 3</fullName>
        <shortName evidence="9">EF-3</shortName>
        <ecNumber evidence="7">3.6.4.-</ecNumber>
    </recommendedName>
    <alternativeName>
        <fullName evidence="8">CnEF3</fullName>
    </alternativeName>
    <alternativeName>
        <fullName evidence="9">Eukaryotic elongation factor 3</fullName>
        <shortName evidence="9">eEF3</shortName>
    </alternativeName>
</protein>
<sequence>MAPAATAAASSGKGSFDLATLFVADKAARDEAGLALADAVKKSGVEFFTQIGFNDAIVKALNDKKSQSAREGACEVISTLCENGAAQLLEPHVISSAENTPFPALLEAFADKVAAVKTAAIAAVKAIVQSMNPWASFVLLPALLNLIRTSGKWQIKAGSLEILQQLITSAPYQMGEAMPDLVPVLAGAVWDTKSDVKKAAKATLEKAVSLVENKDIEKFVPALVKSLLNPIEEVPKTISLLSATTFVSEVTAPTISLIAPLLIRGLDERPTATKRKVCVIADNMSKLVDSEYTVRPFLPQLLPRLIKTAETIADPEARSVANRAIVTLRRIGKVPVESDGSDLPPLPVAEGPHLATNFVALVKKHGGVSVEQTNPGLAYAGVLAASLVNHHNFDQKTWESTLPPYLKLALPSYDSLPAVRELLQKKADEAETDDAKFPDEEEGEDLCNIEQFNLAYGAKILLHHANMRLKRGHRYGLCGRNGSGKSTLMNAIINNQVEGFPPPTEVRTFYVQHDIDGSEAEISILDWVLSDKRLLATPEEIKSTLESVGFDEVKQKNSIGSLSGGWKMKLALARAILFKADILLLDEPTNHLDVLNVDWLINYLTSLTRCTSIIVSHDSDFLNRTVTDVLHLNNFKLKRYPGNLEEFVKHVPEAKSYYQLDVAEDYQFKLPNPPLLDGVKTKEKSLLKMRNVSFQYPGSSIQQLYDISLQVSLSSRVAVLGPNGSGKSTLVKLLTGETEPNLGGQVWKHPNLVIGYVAQHAFHHIDNHLDSTPLEYMLWRYQTGEDLEEMHKANRVMTEAELAKMKEGATVIKDGVKRIIDELVARKKLKQSYEYEVSFKGMSSAENIWISRDELVARGFEKKVMELDTREAQRLGLMRPLVRREIEKHFEDFGLDAEFVSHNSMRGLSGGQKVKVVLGAATWRRPHIICLDEPTNYLDRESLAALIAALKNFEGGVLIITHNREFSESICTEVWAMREGHLEASGHNWVEGQGSGERIDKKAGDDDEVEYDALGNPIVKAKKEKKLSAADKRKAKKDRMARRKRGEEVFSDEEL</sequence>
<comment type="function">
    <text evidence="1 3 7">Ribosome-dependent ATPase that functions in cytoplasmic translation elongation (PubMed:11244063). Required for the ATP-dependent release of deacylated tRNA from the ribosomal E-site during protein biosynthesis (By similarity). Stimulates the eEF1A-dependent binding of aminoacyl-tRNA to the ribosomal A-site, which has reduced affinity for tRNA as long as the E-site is occupied (By similarity). Assists translation termination by stimulating the release of nascent protein from the ribosome by release factors (By similarity). Appears to target calcium-channel protein CCH1 to the plasma membrane (By similarity).</text>
</comment>
<comment type="catalytic activity">
    <reaction evidence="7">
        <text>ATP + H2O = ADP + phosphate + H(+)</text>
        <dbReference type="Rhea" id="RHEA:13065"/>
        <dbReference type="ChEBI" id="CHEBI:15377"/>
        <dbReference type="ChEBI" id="CHEBI:15378"/>
        <dbReference type="ChEBI" id="CHEBI:30616"/>
        <dbReference type="ChEBI" id="CHEBI:43474"/>
        <dbReference type="ChEBI" id="CHEBI:456216"/>
    </reaction>
</comment>
<comment type="biophysicochemical properties">
    <kinetics>
        <KM evidence="7">0.318 mM for ATP (at 30 degrees Celsius)</KM>
    </kinetics>
</comment>
<comment type="pathway">
    <text evidence="2">Protein biosynthesis; polypeptide chain elongation.</text>
</comment>
<comment type="subunit">
    <text evidence="7">Associates with ribosomes.</text>
</comment>
<comment type="subcellular location">
    <subcellularLocation>
        <location evidence="3">Cytoplasm</location>
        <location evidence="3">Cytosol</location>
    </subcellularLocation>
</comment>
<comment type="similarity">
    <text evidence="9">Belongs to the ABC transporter superfamily. ABCF family. EF3 subfamily.</text>
</comment>
<proteinExistence type="evidence at protein level"/>